<feature type="chain" id="PRO_1000166315" description="Large ribosomal subunit protein uL15">
    <location>
        <begin position="1"/>
        <end position="146"/>
    </location>
</feature>
<feature type="region of interest" description="Disordered" evidence="2">
    <location>
        <begin position="1"/>
        <end position="51"/>
    </location>
</feature>
<feature type="compositionally biased region" description="Basic and acidic residues" evidence="2">
    <location>
        <begin position="1"/>
        <end position="13"/>
    </location>
</feature>
<feature type="compositionally biased region" description="Gly residues" evidence="2">
    <location>
        <begin position="23"/>
        <end position="35"/>
    </location>
</feature>
<feature type="compositionally biased region" description="Gly residues" evidence="2">
    <location>
        <begin position="42"/>
        <end position="51"/>
    </location>
</feature>
<accession>C1CAN1</accession>
<dbReference type="EMBL" id="CP000918">
    <property type="protein sequence ID" value="ACO16862.1"/>
    <property type="molecule type" value="Genomic_DNA"/>
</dbReference>
<dbReference type="RefSeq" id="WP_000766087.1">
    <property type="nucleotide sequence ID" value="NC_012468.1"/>
</dbReference>
<dbReference type="SMR" id="C1CAN1"/>
<dbReference type="GeneID" id="45652290"/>
<dbReference type="KEGG" id="snm:SP70585_0284"/>
<dbReference type="HOGENOM" id="CLU_055188_4_2_9"/>
<dbReference type="Proteomes" id="UP000002211">
    <property type="component" value="Chromosome"/>
</dbReference>
<dbReference type="GO" id="GO:0022625">
    <property type="term" value="C:cytosolic large ribosomal subunit"/>
    <property type="evidence" value="ECO:0007669"/>
    <property type="project" value="TreeGrafter"/>
</dbReference>
<dbReference type="GO" id="GO:0019843">
    <property type="term" value="F:rRNA binding"/>
    <property type="evidence" value="ECO:0007669"/>
    <property type="project" value="UniProtKB-UniRule"/>
</dbReference>
<dbReference type="GO" id="GO:0003735">
    <property type="term" value="F:structural constituent of ribosome"/>
    <property type="evidence" value="ECO:0007669"/>
    <property type="project" value="InterPro"/>
</dbReference>
<dbReference type="GO" id="GO:0006412">
    <property type="term" value="P:translation"/>
    <property type="evidence" value="ECO:0007669"/>
    <property type="project" value="UniProtKB-UniRule"/>
</dbReference>
<dbReference type="FunFam" id="3.100.10.10:FF:000004">
    <property type="entry name" value="50S ribosomal protein L15"/>
    <property type="match status" value="1"/>
</dbReference>
<dbReference type="Gene3D" id="3.100.10.10">
    <property type="match status" value="1"/>
</dbReference>
<dbReference type="HAMAP" id="MF_01341">
    <property type="entry name" value="Ribosomal_uL15"/>
    <property type="match status" value="1"/>
</dbReference>
<dbReference type="InterPro" id="IPR030878">
    <property type="entry name" value="Ribosomal_uL15"/>
</dbReference>
<dbReference type="InterPro" id="IPR021131">
    <property type="entry name" value="Ribosomal_uL15/eL18"/>
</dbReference>
<dbReference type="InterPro" id="IPR036227">
    <property type="entry name" value="Ribosomal_uL15/eL18_sf"/>
</dbReference>
<dbReference type="InterPro" id="IPR005749">
    <property type="entry name" value="Ribosomal_uL15_bac-type"/>
</dbReference>
<dbReference type="InterPro" id="IPR001196">
    <property type="entry name" value="Ribosomal_uL15_CS"/>
</dbReference>
<dbReference type="NCBIfam" id="TIGR01071">
    <property type="entry name" value="rplO_bact"/>
    <property type="match status" value="1"/>
</dbReference>
<dbReference type="PANTHER" id="PTHR12934">
    <property type="entry name" value="50S RIBOSOMAL PROTEIN L15"/>
    <property type="match status" value="1"/>
</dbReference>
<dbReference type="PANTHER" id="PTHR12934:SF11">
    <property type="entry name" value="LARGE RIBOSOMAL SUBUNIT PROTEIN UL15M"/>
    <property type="match status" value="1"/>
</dbReference>
<dbReference type="Pfam" id="PF00828">
    <property type="entry name" value="Ribosomal_L27A"/>
    <property type="match status" value="1"/>
</dbReference>
<dbReference type="SUPFAM" id="SSF52080">
    <property type="entry name" value="Ribosomal proteins L15p and L18e"/>
    <property type="match status" value="1"/>
</dbReference>
<dbReference type="PROSITE" id="PS00475">
    <property type="entry name" value="RIBOSOMAL_L15"/>
    <property type="match status" value="1"/>
</dbReference>
<name>RL15_STRP7</name>
<proteinExistence type="inferred from homology"/>
<evidence type="ECO:0000255" key="1">
    <source>
        <dbReference type="HAMAP-Rule" id="MF_01341"/>
    </source>
</evidence>
<evidence type="ECO:0000256" key="2">
    <source>
        <dbReference type="SAM" id="MobiDB-lite"/>
    </source>
</evidence>
<evidence type="ECO:0000305" key="3"/>
<keyword id="KW-0687">Ribonucleoprotein</keyword>
<keyword id="KW-0689">Ribosomal protein</keyword>
<keyword id="KW-0694">RNA-binding</keyword>
<keyword id="KW-0699">rRNA-binding</keyword>
<protein>
    <recommendedName>
        <fullName evidence="1">Large ribosomal subunit protein uL15</fullName>
    </recommendedName>
    <alternativeName>
        <fullName evidence="3">50S ribosomal protein L15</fullName>
    </alternativeName>
</protein>
<organism>
    <name type="scientific">Streptococcus pneumoniae (strain 70585)</name>
    <dbReference type="NCBI Taxonomy" id="488221"/>
    <lineage>
        <taxon>Bacteria</taxon>
        <taxon>Bacillati</taxon>
        <taxon>Bacillota</taxon>
        <taxon>Bacilli</taxon>
        <taxon>Lactobacillales</taxon>
        <taxon>Streptococcaceae</taxon>
        <taxon>Streptococcus</taxon>
    </lineage>
</organism>
<gene>
    <name evidence="1" type="primary">rplO</name>
    <name type="ordered locus">SP70585_0284</name>
</gene>
<reference key="1">
    <citation type="journal article" date="2010" name="Genome Biol.">
        <title>Structure and dynamics of the pan-genome of Streptococcus pneumoniae and closely related species.</title>
        <authorList>
            <person name="Donati C."/>
            <person name="Hiller N.L."/>
            <person name="Tettelin H."/>
            <person name="Muzzi A."/>
            <person name="Croucher N.J."/>
            <person name="Angiuoli S.V."/>
            <person name="Oggioni M."/>
            <person name="Dunning Hotopp J.C."/>
            <person name="Hu F.Z."/>
            <person name="Riley D.R."/>
            <person name="Covacci A."/>
            <person name="Mitchell T.J."/>
            <person name="Bentley S.D."/>
            <person name="Kilian M."/>
            <person name="Ehrlich G.D."/>
            <person name="Rappuoli R."/>
            <person name="Moxon E.R."/>
            <person name="Masignani V."/>
        </authorList>
    </citation>
    <scope>NUCLEOTIDE SEQUENCE [LARGE SCALE GENOMIC DNA]</scope>
    <source>
        <strain>70585</strain>
    </source>
</reference>
<comment type="function">
    <text evidence="1">Binds to the 23S rRNA.</text>
</comment>
<comment type="subunit">
    <text evidence="1">Part of the 50S ribosomal subunit.</text>
</comment>
<comment type="similarity">
    <text evidence="1">Belongs to the universal ribosomal protein uL15 family.</text>
</comment>
<sequence length="146" mass="15446">MKLHELKPAEGSRKVRNRVGRGTSSGNGKTSGRGQKGQKARSGGGVRLGFEGGQTPLFRRLPKRGFTNINAKEYAIVNLDQLNVFEDGAEVTPVVLIEAGIVKAEKSGIKILGNGELTKKLTVKAAKFSKSAEEAITAKGGSVEVI</sequence>